<gene>
    <name evidence="1" type="primary">miaB</name>
    <name type="ordered locus">Acel_1488</name>
</gene>
<comment type="function">
    <text evidence="1">Catalyzes the methylthiolation of N6-(dimethylallyl)adenosine (i(6)A), leading to the formation of 2-methylthio-N6-(dimethylallyl)adenosine (ms(2)i(6)A) at position 37 in tRNAs that read codons beginning with uridine.</text>
</comment>
<comment type="catalytic activity">
    <reaction evidence="1">
        <text>N(6)-dimethylallyladenosine(37) in tRNA + (sulfur carrier)-SH + AH2 + 2 S-adenosyl-L-methionine = 2-methylsulfanyl-N(6)-dimethylallyladenosine(37) in tRNA + (sulfur carrier)-H + 5'-deoxyadenosine + L-methionine + A + S-adenosyl-L-homocysteine + 2 H(+)</text>
        <dbReference type="Rhea" id="RHEA:37067"/>
        <dbReference type="Rhea" id="RHEA-COMP:10375"/>
        <dbReference type="Rhea" id="RHEA-COMP:10376"/>
        <dbReference type="Rhea" id="RHEA-COMP:14737"/>
        <dbReference type="Rhea" id="RHEA-COMP:14739"/>
        <dbReference type="ChEBI" id="CHEBI:13193"/>
        <dbReference type="ChEBI" id="CHEBI:15378"/>
        <dbReference type="ChEBI" id="CHEBI:17319"/>
        <dbReference type="ChEBI" id="CHEBI:17499"/>
        <dbReference type="ChEBI" id="CHEBI:29917"/>
        <dbReference type="ChEBI" id="CHEBI:57844"/>
        <dbReference type="ChEBI" id="CHEBI:57856"/>
        <dbReference type="ChEBI" id="CHEBI:59789"/>
        <dbReference type="ChEBI" id="CHEBI:64428"/>
        <dbReference type="ChEBI" id="CHEBI:74415"/>
        <dbReference type="ChEBI" id="CHEBI:74417"/>
        <dbReference type="EC" id="2.8.4.3"/>
    </reaction>
</comment>
<comment type="cofactor">
    <cofactor evidence="1">
        <name>[4Fe-4S] cluster</name>
        <dbReference type="ChEBI" id="CHEBI:49883"/>
    </cofactor>
    <text evidence="1">Binds 2 [4Fe-4S] clusters. One cluster is coordinated with 3 cysteines and an exchangeable S-adenosyl-L-methionine.</text>
</comment>
<comment type="subunit">
    <text evidence="1">Monomer.</text>
</comment>
<comment type="subcellular location">
    <subcellularLocation>
        <location evidence="1">Cytoplasm</location>
    </subcellularLocation>
</comment>
<comment type="similarity">
    <text evidence="1">Belongs to the methylthiotransferase family. MiaB subfamily.</text>
</comment>
<name>MIAB_ACIC1</name>
<organism>
    <name type="scientific">Acidothermus cellulolyticus (strain ATCC 43068 / DSM 8971 / 11B)</name>
    <dbReference type="NCBI Taxonomy" id="351607"/>
    <lineage>
        <taxon>Bacteria</taxon>
        <taxon>Bacillati</taxon>
        <taxon>Actinomycetota</taxon>
        <taxon>Actinomycetes</taxon>
        <taxon>Acidothermales</taxon>
        <taxon>Acidothermaceae</taxon>
        <taxon>Acidothermus</taxon>
    </lineage>
</organism>
<protein>
    <recommendedName>
        <fullName evidence="1">tRNA-2-methylthio-N(6)-dimethylallyladenosine synthase</fullName>
        <ecNumber evidence="1">2.8.4.3</ecNumber>
    </recommendedName>
    <alternativeName>
        <fullName evidence="1">(Dimethylallyl)adenosine tRNA methylthiotransferase MiaB</fullName>
    </alternativeName>
    <alternativeName>
        <fullName evidence="1">tRNA-i(6)A37 methylthiotransferase</fullName>
    </alternativeName>
</protein>
<sequence>MTLLDSDSRQSAEVLPAAGPAPDRPRTYQVRTFGCQMNMHDSERIAGLLEAAGYVRAADDEPADVVVFNTCAVRENADNRLYGNLGLLLPVKKAKPDMQIAVGGCLAQKDKGDIVRRAPWVDVVFGTHNIEALPVLLERARIAREAQVEIREALEVFPSTLPSRRESVYAAWVAISVGCNNTCTFCIVPSLRGRERDRRPGDILREIQTLVADGVLEVTLLGQNVNSYGVDFGDRQAFAKLLRACGTIDGLERVRFTSPHPRDFTDDVIAAMAETPNVMPQLHMPLQSGSDAVLRRMRRSYRKEKYLDIISRVRSAIPDAAITTDIIVGFPGETEDDFAETLDVVRKARFAGAFTFQYSKRPGTPAAEMPDQVPPDVVADRFARLVALVEQIALEENQAQVGRVVEVLVAEGEGRKDAETHRMSGRAPDNRLVHFRATDARPGDVVTVAVTQAAPHCLIADQVLGVRRTRAGDAWEARRSVRPSGVLLGMPALRPRT</sequence>
<reference key="1">
    <citation type="journal article" date="2009" name="Genome Res.">
        <title>Complete genome of the cellulolytic thermophile Acidothermus cellulolyticus 11B provides insights into its ecophysiological and evolutionary adaptations.</title>
        <authorList>
            <person name="Barabote R.D."/>
            <person name="Xie G."/>
            <person name="Leu D.H."/>
            <person name="Normand P."/>
            <person name="Necsulea A."/>
            <person name="Daubin V."/>
            <person name="Medigue C."/>
            <person name="Adney W.S."/>
            <person name="Xu X.C."/>
            <person name="Lapidus A."/>
            <person name="Parales R.E."/>
            <person name="Detter C."/>
            <person name="Pujic P."/>
            <person name="Bruce D."/>
            <person name="Lavire C."/>
            <person name="Challacombe J.F."/>
            <person name="Brettin T.S."/>
            <person name="Berry A.M."/>
        </authorList>
    </citation>
    <scope>NUCLEOTIDE SEQUENCE [LARGE SCALE GENOMIC DNA]</scope>
    <source>
        <strain>ATCC 43068 / DSM 8971 / 11B</strain>
    </source>
</reference>
<dbReference type="EC" id="2.8.4.3" evidence="1"/>
<dbReference type="EMBL" id="CP000481">
    <property type="protein sequence ID" value="ABK53260.1"/>
    <property type="molecule type" value="Genomic_DNA"/>
</dbReference>
<dbReference type="SMR" id="A0LV00"/>
<dbReference type="FunCoup" id="A0LV00">
    <property type="interactions" value="356"/>
</dbReference>
<dbReference type="STRING" id="351607.Acel_1488"/>
<dbReference type="KEGG" id="ace:Acel_1488"/>
<dbReference type="eggNOG" id="COG0621">
    <property type="taxonomic scope" value="Bacteria"/>
</dbReference>
<dbReference type="HOGENOM" id="CLU_018697_2_2_11"/>
<dbReference type="InParanoid" id="A0LV00"/>
<dbReference type="Proteomes" id="UP000008221">
    <property type="component" value="Chromosome"/>
</dbReference>
<dbReference type="GO" id="GO:0005829">
    <property type="term" value="C:cytosol"/>
    <property type="evidence" value="ECO:0007669"/>
    <property type="project" value="TreeGrafter"/>
</dbReference>
<dbReference type="GO" id="GO:0051539">
    <property type="term" value="F:4 iron, 4 sulfur cluster binding"/>
    <property type="evidence" value="ECO:0007669"/>
    <property type="project" value="UniProtKB-UniRule"/>
</dbReference>
<dbReference type="GO" id="GO:0046872">
    <property type="term" value="F:metal ion binding"/>
    <property type="evidence" value="ECO:0007669"/>
    <property type="project" value="UniProtKB-KW"/>
</dbReference>
<dbReference type="GO" id="GO:0035597">
    <property type="term" value="F:N6-isopentenyladenosine methylthiotransferase activity"/>
    <property type="evidence" value="ECO:0007669"/>
    <property type="project" value="TreeGrafter"/>
</dbReference>
<dbReference type="CDD" id="cd01335">
    <property type="entry name" value="Radical_SAM"/>
    <property type="match status" value="1"/>
</dbReference>
<dbReference type="FunFam" id="3.40.50.12160:FF:000003">
    <property type="entry name" value="CDK5 regulatory subunit-associated protein 1"/>
    <property type="match status" value="1"/>
</dbReference>
<dbReference type="FunFam" id="3.80.30.20:FF:000001">
    <property type="entry name" value="tRNA-2-methylthio-N(6)-dimethylallyladenosine synthase 2"/>
    <property type="match status" value="1"/>
</dbReference>
<dbReference type="Gene3D" id="3.40.50.12160">
    <property type="entry name" value="Methylthiotransferase, N-terminal domain"/>
    <property type="match status" value="1"/>
</dbReference>
<dbReference type="Gene3D" id="3.80.30.20">
    <property type="entry name" value="tm_1862 like domain"/>
    <property type="match status" value="1"/>
</dbReference>
<dbReference type="HAMAP" id="MF_01864">
    <property type="entry name" value="tRNA_metthiotr_MiaB"/>
    <property type="match status" value="1"/>
</dbReference>
<dbReference type="InterPro" id="IPR006638">
    <property type="entry name" value="Elp3/MiaA/NifB-like_rSAM"/>
</dbReference>
<dbReference type="InterPro" id="IPR005839">
    <property type="entry name" value="Methylthiotransferase"/>
</dbReference>
<dbReference type="InterPro" id="IPR020612">
    <property type="entry name" value="Methylthiotransferase_CS"/>
</dbReference>
<dbReference type="InterPro" id="IPR013848">
    <property type="entry name" value="Methylthiotransferase_N"/>
</dbReference>
<dbReference type="InterPro" id="IPR038135">
    <property type="entry name" value="Methylthiotransferase_N_sf"/>
</dbReference>
<dbReference type="InterPro" id="IPR006463">
    <property type="entry name" value="MiaB_methiolase"/>
</dbReference>
<dbReference type="InterPro" id="IPR007197">
    <property type="entry name" value="rSAM"/>
</dbReference>
<dbReference type="InterPro" id="IPR023404">
    <property type="entry name" value="rSAM_horseshoe"/>
</dbReference>
<dbReference type="InterPro" id="IPR002792">
    <property type="entry name" value="TRAM_dom"/>
</dbReference>
<dbReference type="NCBIfam" id="TIGR01574">
    <property type="entry name" value="miaB-methiolase"/>
    <property type="match status" value="1"/>
</dbReference>
<dbReference type="NCBIfam" id="TIGR00089">
    <property type="entry name" value="MiaB/RimO family radical SAM methylthiotransferase"/>
    <property type="match status" value="1"/>
</dbReference>
<dbReference type="PANTHER" id="PTHR43020">
    <property type="entry name" value="CDK5 REGULATORY SUBUNIT-ASSOCIATED PROTEIN 1"/>
    <property type="match status" value="1"/>
</dbReference>
<dbReference type="PANTHER" id="PTHR43020:SF2">
    <property type="entry name" value="MITOCHONDRIAL TRNA METHYLTHIOTRANSFERASE CDK5RAP1"/>
    <property type="match status" value="1"/>
</dbReference>
<dbReference type="Pfam" id="PF04055">
    <property type="entry name" value="Radical_SAM"/>
    <property type="match status" value="1"/>
</dbReference>
<dbReference type="Pfam" id="PF01938">
    <property type="entry name" value="TRAM"/>
    <property type="match status" value="1"/>
</dbReference>
<dbReference type="Pfam" id="PF00919">
    <property type="entry name" value="UPF0004"/>
    <property type="match status" value="1"/>
</dbReference>
<dbReference type="SFLD" id="SFLDF00273">
    <property type="entry name" value="(dimethylallyl)adenosine_tRNA"/>
    <property type="match status" value="1"/>
</dbReference>
<dbReference type="SFLD" id="SFLDG01082">
    <property type="entry name" value="B12-binding_domain_containing"/>
    <property type="match status" value="1"/>
</dbReference>
<dbReference type="SFLD" id="SFLDS00029">
    <property type="entry name" value="Radical_SAM"/>
    <property type="match status" value="1"/>
</dbReference>
<dbReference type="SMART" id="SM00729">
    <property type="entry name" value="Elp3"/>
    <property type="match status" value="1"/>
</dbReference>
<dbReference type="SUPFAM" id="SSF102114">
    <property type="entry name" value="Radical SAM enzymes"/>
    <property type="match status" value="1"/>
</dbReference>
<dbReference type="PROSITE" id="PS51449">
    <property type="entry name" value="MTTASE_N"/>
    <property type="match status" value="1"/>
</dbReference>
<dbReference type="PROSITE" id="PS01278">
    <property type="entry name" value="MTTASE_RADICAL"/>
    <property type="match status" value="1"/>
</dbReference>
<dbReference type="PROSITE" id="PS51918">
    <property type="entry name" value="RADICAL_SAM"/>
    <property type="match status" value="1"/>
</dbReference>
<dbReference type="PROSITE" id="PS50926">
    <property type="entry name" value="TRAM"/>
    <property type="match status" value="1"/>
</dbReference>
<proteinExistence type="inferred from homology"/>
<evidence type="ECO:0000255" key="1">
    <source>
        <dbReference type="HAMAP-Rule" id="MF_01864"/>
    </source>
</evidence>
<evidence type="ECO:0000255" key="2">
    <source>
        <dbReference type="PROSITE-ProRule" id="PRU01266"/>
    </source>
</evidence>
<evidence type="ECO:0000256" key="3">
    <source>
        <dbReference type="SAM" id="MobiDB-lite"/>
    </source>
</evidence>
<accession>A0LV00</accession>
<keyword id="KW-0004">4Fe-4S</keyword>
<keyword id="KW-0963">Cytoplasm</keyword>
<keyword id="KW-0408">Iron</keyword>
<keyword id="KW-0411">Iron-sulfur</keyword>
<keyword id="KW-0479">Metal-binding</keyword>
<keyword id="KW-1185">Reference proteome</keyword>
<keyword id="KW-0949">S-adenosyl-L-methionine</keyword>
<keyword id="KW-0808">Transferase</keyword>
<keyword id="KW-0819">tRNA processing</keyword>
<feature type="chain" id="PRO_0000374084" description="tRNA-2-methylthio-N(6)-dimethylallyladenosine synthase">
    <location>
        <begin position="1"/>
        <end position="497"/>
    </location>
</feature>
<feature type="domain" description="MTTase N-terminal" evidence="1">
    <location>
        <begin position="26"/>
        <end position="142"/>
    </location>
</feature>
<feature type="domain" description="Radical SAM core" evidence="2">
    <location>
        <begin position="165"/>
        <end position="395"/>
    </location>
</feature>
<feature type="domain" description="TRAM" evidence="1">
    <location>
        <begin position="398"/>
        <end position="464"/>
    </location>
</feature>
<feature type="region of interest" description="Disordered" evidence="3">
    <location>
        <begin position="1"/>
        <end position="26"/>
    </location>
</feature>
<feature type="compositionally biased region" description="Basic and acidic residues" evidence="3">
    <location>
        <begin position="1"/>
        <end position="10"/>
    </location>
</feature>
<feature type="binding site" evidence="1">
    <location>
        <position position="35"/>
    </location>
    <ligand>
        <name>[4Fe-4S] cluster</name>
        <dbReference type="ChEBI" id="CHEBI:49883"/>
        <label>1</label>
    </ligand>
</feature>
<feature type="binding site" evidence="1">
    <location>
        <position position="71"/>
    </location>
    <ligand>
        <name>[4Fe-4S] cluster</name>
        <dbReference type="ChEBI" id="CHEBI:49883"/>
        <label>1</label>
    </ligand>
</feature>
<feature type="binding site" evidence="1">
    <location>
        <position position="105"/>
    </location>
    <ligand>
        <name>[4Fe-4S] cluster</name>
        <dbReference type="ChEBI" id="CHEBI:49883"/>
        <label>1</label>
    </ligand>
</feature>
<feature type="binding site" evidence="1">
    <location>
        <position position="179"/>
    </location>
    <ligand>
        <name>[4Fe-4S] cluster</name>
        <dbReference type="ChEBI" id="CHEBI:49883"/>
        <label>2</label>
        <note>4Fe-4S-S-AdoMet</note>
    </ligand>
</feature>
<feature type="binding site" evidence="1">
    <location>
        <position position="183"/>
    </location>
    <ligand>
        <name>[4Fe-4S] cluster</name>
        <dbReference type="ChEBI" id="CHEBI:49883"/>
        <label>2</label>
        <note>4Fe-4S-S-AdoMet</note>
    </ligand>
</feature>
<feature type="binding site" evidence="1">
    <location>
        <position position="186"/>
    </location>
    <ligand>
        <name>[4Fe-4S] cluster</name>
        <dbReference type="ChEBI" id="CHEBI:49883"/>
        <label>2</label>
        <note>4Fe-4S-S-AdoMet</note>
    </ligand>
</feature>